<dbReference type="EC" id="1.18.6.1"/>
<dbReference type="EMBL" id="X70033">
    <property type="protein sequence ID" value="CAA49625.1"/>
    <property type="molecule type" value="Genomic_DNA"/>
</dbReference>
<dbReference type="PIR" id="S34945">
    <property type="entry name" value="S34945"/>
</dbReference>
<dbReference type="SMR" id="Q07933"/>
<dbReference type="GO" id="GO:0005524">
    <property type="term" value="F:ATP binding"/>
    <property type="evidence" value="ECO:0007669"/>
    <property type="project" value="UniProtKB-KW"/>
</dbReference>
<dbReference type="GO" id="GO:0051536">
    <property type="term" value="F:iron-sulfur cluster binding"/>
    <property type="evidence" value="ECO:0007669"/>
    <property type="project" value="UniProtKB-KW"/>
</dbReference>
<dbReference type="GO" id="GO:0046872">
    <property type="term" value="F:metal ion binding"/>
    <property type="evidence" value="ECO:0007669"/>
    <property type="project" value="UniProtKB-KW"/>
</dbReference>
<dbReference type="GO" id="GO:0016163">
    <property type="term" value="F:nitrogenase activity"/>
    <property type="evidence" value="ECO:0007669"/>
    <property type="project" value="UniProtKB-EC"/>
</dbReference>
<dbReference type="GO" id="GO:0009399">
    <property type="term" value="P:nitrogen fixation"/>
    <property type="evidence" value="ECO:0007669"/>
    <property type="project" value="UniProtKB-KW"/>
</dbReference>
<dbReference type="CDD" id="cd01977">
    <property type="entry name" value="Nitrogenase_VFe_alpha"/>
    <property type="match status" value="1"/>
</dbReference>
<dbReference type="Gene3D" id="3.40.50.1980">
    <property type="entry name" value="Nitrogenase molybdenum iron protein domain"/>
    <property type="match status" value="3"/>
</dbReference>
<dbReference type="InterPro" id="IPR000510">
    <property type="entry name" value="Nase/OxRdtase_comp1"/>
</dbReference>
<dbReference type="InterPro" id="IPR005974">
    <property type="entry name" value="Nase_asu"/>
</dbReference>
<dbReference type="InterPro" id="IPR010143">
    <property type="entry name" value="Nase_comp1_asu"/>
</dbReference>
<dbReference type="InterPro" id="IPR000318">
    <property type="entry name" value="Nase_comp1_CS"/>
</dbReference>
<dbReference type="InterPro" id="IPR011290">
    <property type="entry name" value="Nase_Fe-Fe_asu"/>
</dbReference>
<dbReference type="NCBIfam" id="TIGR01284">
    <property type="entry name" value="alt_nitrog_alph"/>
    <property type="match status" value="1"/>
</dbReference>
<dbReference type="NCBIfam" id="TIGR01861">
    <property type="entry name" value="ANFD"/>
    <property type="match status" value="1"/>
</dbReference>
<dbReference type="NCBIfam" id="TIGR01862">
    <property type="entry name" value="N2-ase-Ialpha"/>
    <property type="match status" value="1"/>
</dbReference>
<dbReference type="PANTHER" id="PTHR43457">
    <property type="entry name" value="NITROGENASE MOLYBDENUM-IRON PROTEIN ALPHA CHAIN"/>
    <property type="match status" value="1"/>
</dbReference>
<dbReference type="PANTHER" id="PTHR43457:SF1">
    <property type="entry name" value="NITROGENASE MOLYBDENUM-IRON PROTEIN ALPHA CHAIN"/>
    <property type="match status" value="1"/>
</dbReference>
<dbReference type="Pfam" id="PF00148">
    <property type="entry name" value="Oxidored_nitro"/>
    <property type="match status" value="1"/>
</dbReference>
<dbReference type="SUPFAM" id="SSF53807">
    <property type="entry name" value="Helical backbone' metal receptor"/>
    <property type="match status" value="1"/>
</dbReference>
<dbReference type="PROSITE" id="PS00699">
    <property type="entry name" value="NITROGENASE_1_1"/>
    <property type="match status" value="1"/>
</dbReference>
<dbReference type="PROSITE" id="PS00090">
    <property type="entry name" value="NITROGENASE_1_2"/>
    <property type="match status" value="1"/>
</dbReference>
<organism>
    <name type="scientific">Rhodobacter capsulatus</name>
    <name type="common">Rhodopseudomonas capsulata</name>
    <dbReference type="NCBI Taxonomy" id="1061"/>
    <lineage>
        <taxon>Bacteria</taxon>
        <taxon>Pseudomonadati</taxon>
        <taxon>Pseudomonadota</taxon>
        <taxon>Alphaproteobacteria</taxon>
        <taxon>Rhodobacterales</taxon>
        <taxon>Rhodobacter group</taxon>
        <taxon>Rhodobacter</taxon>
    </lineage>
</organism>
<accession>Q07933</accession>
<reference key="1">
    <citation type="journal article" date="1993" name="Mol. Microbiol.">
        <title>Characterization of anf genes specific for the alternative nitrogenase and identification of nif genes required for both nitrogenases in Rhodobacter capsulatus.</title>
        <authorList>
            <person name="Schueddekopf K."/>
            <person name="Hennecke S."/>
            <person name="Liese U."/>
            <person name="Kutsche M."/>
            <person name="Klipp W."/>
        </authorList>
    </citation>
    <scope>NUCLEOTIDE SEQUENCE [GENOMIC DNA]</scope>
    <source>
        <strain>B10S</strain>
    </source>
</reference>
<gene>
    <name type="primary">anfD</name>
</gene>
<keyword id="KW-0067">ATP-binding</keyword>
<keyword id="KW-0408">Iron</keyword>
<keyword id="KW-0411">Iron-sulfur</keyword>
<keyword id="KW-0479">Metal-binding</keyword>
<keyword id="KW-0535">Nitrogen fixation</keyword>
<keyword id="KW-0547">Nucleotide-binding</keyword>
<keyword id="KW-0560">Oxidoreductase</keyword>
<name>ANFD_RHOCA</name>
<protein>
    <recommendedName>
        <fullName>Nitrogenase iron-iron protein alpha chain</fullName>
        <ecNumber>1.18.6.1</ecNumber>
    </recommendedName>
    <alternativeName>
        <fullName>Dinitrogenase 3 subunit alpha</fullName>
    </alternativeName>
    <alternativeName>
        <fullName>Nitrogenase component I</fullName>
    </alternativeName>
</protein>
<sequence>MPYHEFEVSKCIPERREHAVMKAAGEDLTSCLPKGYLNTIPGTISERGCAYCGAKHVIGTPMKDVIHISHGPNGCTYDTWQTKRYISDNDNFQLKYTFATDVKEKHVVFGAEGLLKKSMHEAFDAFPNIKRMTVYQTCTTALIGDDVDAIAKEVMEERGDVDVFVCNSPGFAGPSQSGGHHKINIAWLNQKVGTVEPDYLGEHVINYVGEYNIQGDQEVMIDYFNRMGIQVLSTFTGNGSYDSLRMMHRAHLNVLECARSAEYICDELRARYGIPRLDIDGFGFEPLANSLRKVALFFGIEDKAEAIIAEEYAKWKPQLDWYKERLKGKKVCLWPGGSKLWHWAHAIEEEMGLKVVSVYTKFGHQGDMEKGVSRCGEGALAIDDPNELESVEAIEMLKPDIIFTGKRPGEFVKKHGVPYLNAHAYHNGPYKGFEGWVRFARDIYNAIYSPMRQLAALDISAPDAAITSGFRTAKMNADLTVSDEVKFSEVLHEYTGKYDSIAEIRARNQPMPPSRKLRDAVQPAAE</sequence>
<evidence type="ECO:0000250" key="1"/>
<evidence type="ECO:0000256" key="2">
    <source>
        <dbReference type="SAM" id="MobiDB-lite"/>
    </source>
</evidence>
<evidence type="ECO:0000305" key="3"/>
<proteinExistence type="inferred from homology"/>
<comment type="function">
    <text>This iron-iron protein is part of the nitrogenase complex that catalyzes the key enzymatic reactions in nitrogen fixation. Other nitrogenase complexes utilize a molybdenum-iron protein or a vanadium-iron protein.</text>
</comment>
<comment type="catalytic activity">
    <reaction>
        <text>N2 + 8 reduced [2Fe-2S]-[ferredoxin] + 16 ATP + 16 H2O = H2 + 8 oxidized [2Fe-2S]-[ferredoxin] + 2 NH4(+) + 16 ADP + 16 phosphate + 6 H(+)</text>
        <dbReference type="Rhea" id="RHEA:21448"/>
        <dbReference type="Rhea" id="RHEA-COMP:10000"/>
        <dbReference type="Rhea" id="RHEA-COMP:10001"/>
        <dbReference type="ChEBI" id="CHEBI:15377"/>
        <dbReference type="ChEBI" id="CHEBI:15378"/>
        <dbReference type="ChEBI" id="CHEBI:17997"/>
        <dbReference type="ChEBI" id="CHEBI:18276"/>
        <dbReference type="ChEBI" id="CHEBI:28938"/>
        <dbReference type="ChEBI" id="CHEBI:30616"/>
        <dbReference type="ChEBI" id="CHEBI:33737"/>
        <dbReference type="ChEBI" id="CHEBI:33738"/>
        <dbReference type="ChEBI" id="CHEBI:43474"/>
        <dbReference type="ChEBI" id="CHEBI:456216"/>
        <dbReference type="EC" id="1.18.6.1"/>
    </reaction>
</comment>
<comment type="cofactor">
    <cofactor evidence="1">
        <name>[8Fe-7S] cluster</name>
        <dbReference type="ChEBI" id="CHEBI:21143"/>
    </cofactor>
    <text evidence="1">Binds 1 [8Fe-7S] cluster per heterodimer.</text>
</comment>
<comment type="cofactor">
    <cofactor evidence="1">
        <name>[8Fe-9S-C-homocitryl] cluster</name>
        <dbReference type="ChEBI" id="CHEBI:60504"/>
    </cofactor>
    <text evidence="1">Binds 1 [8Fe-9S-C-homocitryl] cluster per subunit.</text>
</comment>
<comment type="subunit">
    <text>Hexamer of two alpha, two beta, and two delta chains.</text>
</comment>
<comment type="miscellaneous">
    <text>The structure of the 8Fe-9S-C-homocitryl cluster is assumed to be analogous to the 7Fe-Mo-9S-C-homocitryl cluster.</text>
</comment>
<comment type="similarity">
    <text evidence="3">Belongs to the NifD/NifK/NifE/NifN family.</text>
</comment>
<feature type="chain" id="PRO_0000153082" description="Nitrogenase iron-iron protein alpha chain">
    <location>
        <begin position="1"/>
        <end position="526"/>
    </location>
</feature>
<feature type="region of interest" description="Disordered" evidence="2">
    <location>
        <begin position="507"/>
        <end position="526"/>
    </location>
</feature>
<feature type="binding site" evidence="1">
    <location>
        <position position="49"/>
    </location>
    <ligand>
        <name>[8Fe-7S] cluster</name>
        <dbReference type="ChEBI" id="CHEBI:21143"/>
        <note>ligand shared with beta chain</note>
    </ligand>
</feature>
<feature type="binding site" evidence="1">
    <location>
        <position position="75"/>
    </location>
    <ligand>
        <name>[8Fe-7S] cluster</name>
        <dbReference type="ChEBI" id="CHEBI:21143"/>
        <note>ligand shared with beta chain</note>
    </ligand>
</feature>
<feature type="binding site" evidence="1">
    <location>
        <position position="138"/>
    </location>
    <ligand>
        <name>[8Fe-7S] cluster</name>
        <dbReference type="ChEBI" id="CHEBI:21143"/>
        <note>ligand shared with beta chain</note>
    </ligand>
</feature>
<feature type="binding site" evidence="1">
    <location>
        <position position="257"/>
    </location>
    <ligand>
        <name>[8Fe-9S-C-homocitryl] cluster</name>
        <dbReference type="ChEBI" id="CHEBI:60504"/>
    </ligand>
</feature>
<feature type="binding site" evidence="1">
    <location>
        <position position="423"/>
    </location>
    <ligand>
        <name>[8Fe-9S-C-homocitryl] cluster</name>
        <dbReference type="ChEBI" id="CHEBI:60504"/>
    </ligand>
</feature>